<feature type="chain" id="PRO_0000447640" description="Virulence factor PIT1">
    <location>
        <begin position="1"/>
        <end position="435"/>
    </location>
</feature>
<feature type="transmembrane region" description="Helical" evidence="1">
    <location>
        <begin position="33"/>
        <end position="53"/>
    </location>
</feature>
<feature type="transmembrane region" description="Helical" evidence="1">
    <location>
        <begin position="77"/>
        <end position="97"/>
    </location>
</feature>
<feature type="transmembrane region" description="Helical" evidence="1">
    <location>
        <begin position="111"/>
        <end position="131"/>
    </location>
</feature>
<feature type="transmembrane region" description="Helical" evidence="1">
    <location>
        <begin position="143"/>
        <end position="163"/>
    </location>
</feature>
<feature type="transmembrane region" description="Helical" evidence="1">
    <location>
        <begin position="204"/>
        <end position="224"/>
    </location>
</feature>
<feature type="region of interest" description="Disordered" evidence="3">
    <location>
        <begin position="392"/>
        <end position="435"/>
    </location>
</feature>
<feature type="compositionally biased region" description="Polar residues" evidence="3">
    <location>
        <begin position="392"/>
        <end position="404"/>
    </location>
</feature>
<feature type="compositionally biased region" description="Pro residues" evidence="3">
    <location>
        <begin position="418"/>
        <end position="435"/>
    </location>
</feature>
<feature type="glycosylation site" description="N-linked (GlcNAc...) asparagine" evidence="2">
    <location>
        <position position="330"/>
    </location>
</feature>
<evidence type="ECO:0000255" key="1"/>
<evidence type="ECO:0000255" key="2">
    <source>
        <dbReference type="PROSITE-ProRule" id="PRU00498"/>
    </source>
</evidence>
<evidence type="ECO:0000256" key="3">
    <source>
        <dbReference type="SAM" id="MobiDB-lite"/>
    </source>
</evidence>
<evidence type="ECO:0000269" key="4">
    <source>
    </source>
</evidence>
<evidence type="ECO:0000269" key="5">
    <source>
    </source>
</evidence>
<evidence type="ECO:0000269" key="6">
    <source>
    </source>
</evidence>
<evidence type="ECO:0000303" key="7">
    <source>
    </source>
</evidence>
<evidence type="ECO:0000303" key="8">
    <source>
    </source>
</evidence>
<protein>
    <recommendedName>
        <fullName evidence="7">Virulence factor PIT1</fullName>
    </recommendedName>
    <alternativeName>
        <fullName evidence="8">Proteins important for tumors 1</fullName>
    </alternativeName>
</protein>
<organism>
    <name type="scientific">Mycosarcoma maydis</name>
    <name type="common">Corn smut fungus</name>
    <name type="synonym">Ustilago maydis</name>
    <dbReference type="NCBI Taxonomy" id="5270"/>
    <lineage>
        <taxon>Eukaryota</taxon>
        <taxon>Fungi</taxon>
        <taxon>Dikarya</taxon>
        <taxon>Basidiomycota</taxon>
        <taxon>Ustilaginomycotina</taxon>
        <taxon>Ustilaginomycetes</taxon>
        <taxon>Ustilaginales</taxon>
        <taxon>Ustilaginaceae</taxon>
        <taxon>Mycosarcoma</taxon>
    </lineage>
</organism>
<sequence>MERHDGEEYIPAIFGGQPPHASQVISLMKFSQETTTWNLPIMIAQALLVSEVIRTYPAELRMLHRLFQRKHPNMAEIFFILIKYLTIFAVIFDILVTETFAARTDFDCRSWAWTSSTFYFMCSTLVFCVIGWRARIIFRTSQVASWSLSVGLMGQFAVAMWTNYRVDKADALTPAGTCAPAAQVHADASQRNAALQLHFWQSSTFWFLLYNTIFESSILMACCIKLRKTSSGPSGLTKIAKVLFSNNVHYMAGVETCNVIELVMLLGWTSSLPPVHITSIAIQIVVGLQMLIGEQEAVYSPTCSQLSYSQYSSDSGGYINKHHAATSSSNGTFSTPSRTLSYVKRPGTGTTVADIGCADASGGGQHGRKGTFSSISSVPAYVKANPIVETVSPQMPSKAQSQSIPYKREVEVTVDMSPVPPPPGPSPAPLPAPYM</sequence>
<accession>A0A0D1E6B3</accession>
<proteinExistence type="evidence at protein level"/>
<reference key="1">
    <citation type="journal article" date="2006" name="Nature">
        <title>Insights from the genome of the biotrophic fungal plant pathogen Ustilago maydis.</title>
        <authorList>
            <person name="Kaemper J."/>
            <person name="Kahmann R."/>
            <person name="Boelker M."/>
            <person name="Ma L.-J."/>
            <person name="Brefort T."/>
            <person name="Saville B.J."/>
            <person name="Banuett F."/>
            <person name="Kronstad J.W."/>
            <person name="Gold S.E."/>
            <person name="Mueller O."/>
            <person name="Perlin M.H."/>
            <person name="Woesten H.A.B."/>
            <person name="de Vries R."/>
            <person name="Ruiz-Herrera J."/>
            <person name="Reynaga-Pena C.G."/>
            <person name="Snetselaar K."/>
            <person name="McCann M."/>
            <person name="Perez-Martin J."/>
            <person name="Feldbruegge M."/>
            <person name="Basse C.W."/>
            <person name="Steinberg G."/>
            <person name="Ibeas J.I."/>
            <person name="Holloman W."/>
            <person name="Guzman P."/>
            <person name="Farman M.L."/>
            <person name="Stajich J.E."/>
            <person name="Sentandreu R."/>
            <person name="Gonzalez-Prieto J.M."/>
            <person name="Kennell J.C."/>
            <person name="Molina L."/>
            <person name="Schirawski J."/>
            <person name="Mendoza-Mendoza A."/>
            <person name="Greilinger D."/>
            <person name="Muench K."/>
            <person name="Roessel N."/>
            <person name="Scherer M."/>
            <person name="Vranes M."/>
            <person name="Ladendorf O."/>
            <person name="Vincon V."/>
            <person name="Fuchs U."/>
            <person name="Sandrock B."/>
            <person name="Meng S."/>
            <person name="Ho E.C.H."/>
            <person name="Cahill M.J."/>
            <person name="Boyce K.J."/>
            <person name="Klose J."/>
            <person name="Klosterman S.J."/>
            <person name="Deelstra H.J."/>
            <person name="Ortiz-Castellanos L."/>
            <person name="Li W."/>
            <person name="Sanchez-Alonso P."/>
            <person name="Schreier P.H."/>
            <person name="Haeuser-Hahn I."/>
            <person name="Vaupel M."/>
            <person name="Koopmann E."/>
            <person name="Friedrich G."/>
            <person name="Voss H."/>
            <person name="Schlueter T."/>
            <person name="Margolis J."/>
            <person name="Platt D."/>
            <person name="Swimmer C."/>
            <person name="Gnirke A."/>
            <person name="Chen F."/>
            <person name="Vysotskaia V."/>
            <person name="Mannhaupt G."/>
            <person name="Gueldener U."/>
            <person name="Muensterkoetter M."/>
            <person name="Haase D."/>
            <person name="Oesterheld M."/>
            <person name="Mewes H.-W."/>
            <person name="Mauceli E.W."/>
            <person name="DeCaprio D."/>
            <person name="Wade C.M."/>
            <person name="Butler J."/>
            <person name="Young S.K."/>
            <person name="Jaffe D.B."/>
            <person name="Calvo S.E."/>
            <person name="Nusbaum C."/>
            <person name="Galagan J.E."/>
            <person name="Birren B.W."/>
        </authorList>
    </citation>
    <scope>NUCLEOTIDE SEQUENCE [LARGE SCALE GENOMIC DNA]</scope>
    <source>
        <strain>DSM 14603 / FGSC 9021 / UM521</strain>
    </source>
</reference>
<reference key="2">
    <citation type="submission" date="2014-09" db="EMBL/GenBank/DDBJ databases">
        <authorList>
            <person name="Gueldener U."/>
            <person name="Muensterkoetter M."/>
            <person name="Walter M.C."/>
            <person name="Mannhaupt G."/>
            <person name="Kahmann R."/>
        </authorList>
    </citation>
    <scope>GENOME REANNOTATION</scope>
    <source>
        <strain>DSM 14603 / FGSC 9021 / UM521</strain>
    </source>
</reference>
<reference key="3">
    <citation type="journal article" date="2011" name="Mol. Microbiol.">
        <title>Two linked genes encoding a secreted effector and a membrane protein are essential for Ustilago maydis-induced tumour formation.</title>
        <authorList>
            <person name="Doehlemann G."/>
            <person name="Reissmann S."/>
            <person name="Assmann D."/>
            <person name="Fleckenstein M."/>
            <person name="Kahmann R."/>
        </authorList>
    </citation>
    <scope>INDUCTION</scope>
    <scope>FUNCTION</scope>
    <scope>DISRUPTION PHENOTYPE</scope>
    <scope>SUBCELLULAR LOCATION</scope>
</reference>
<reference key="4">
    <citation type="journal article" date="2012" name="PLoS Pathog.">
        <title>Identification of O-mannosylated virulence factors in Ustilago maydis.</title>
        <authorList>
            <person name="Fernandez-Alvarez A."/>
            <person name="Marin-Menguiano M."/>
            <person name="Lanver D."/>
            <person name="Jimenez-Martin A."/>
            <person name="Elias-Villalobos A."/>
            <person name="Perez-Pulido A.J."/>
            <person name="Kahmann R."/>
            <person name="Ibeas J.I."/>
        </authorList>
    </citation>
    <scope>GLYCOSYLATION</scope>
</reference>
<reference key="5">
    <citation type="journal article" date="2016" name="PLoS ONE">
        <title>Unfolded protein response (UPR) regulator Cib1 controls expression of genes encoding secreted virulence factors in Ustilago maydis.</title>
        <authorList>
            <person name="Hampel M."/>
            <person name="Jakobi M."/>
            <person name="Schmitz L."/>
            <person name="Meyer U."/>
            <person name="Finkernagel F."/>
            <person name="Doehlemann G."/>
            <person name="Heimel K."/>
        </authorList>
    </citation>
    <scope>INDUCTION</scope>
</reference>
<gene>
    <name evidence="8" type="primary">PIT1</name>
    <name type="ORF">UMAG_01374</name>
</gene>
<comment type="function">
    <text evidence="4">Plasma membrane virulence factor required for spreading and inducing tumors in infected leaves.</text>
</comment>
<comment type="subcellular location">
    <subcellularLocation>
        <location evidence="4">Cell membrane</location>
        <topology evidence="1">Multi-pass membrane protein</topology>
    </subcellularLocation>
</comment>
<comment type="induction">
    <text evidence="4 6">Expression is highly up-regulated during all stages of pathogenic development (PubMed:21692877). Expression is positively regulated by the unfolded protein response (UPR) signaling via the binding of CIB1 to the UPRE motif localized at the PIT1/PIT2 promoter (PubMed:27093436).</text>
</comment>
<comment type="PTM">
    <text evidence="5">O-mannosylated by PMT4 (PubMed:22416226). Is also N-glycosylated (PubMed:22416226).</text>
</comment>
<comment type="disruption phenotype">
    <text evidence="4">Keeps the ability to penetrate maize epidermis and to grow intracellularly at sites of infection but fails to spread and induce tumors in infected leaves.</text>
</comment>
<name>PIT1_MYCMD</name>
<keyword id="KW-1003">Cell membrane</keyword>
<keyword id="KW-0325">Glycoprotein</keyword>
<keyword id="KW-0472">Membrane</keyword>
<keyword id="KW-1185">Reference proteome</keyword>
<keyword id="KW-0812">Transmembrane</keyword>
<keyword id="KW-1133">Transmembrane helix</keyword>
<dbReference type="EMBL" id="CM003141">
    <property type="protein sequence ID" value="KIS71479.1"/>
    <property type="molecule type" value="Genomic_DNA"/>
</dbReference>
<dbReference type="RefSeq" id="XP_011387263.1">
    <property type="nucleotide sequence ID" value="XM_011388961.1"/>
</dbReference>
<dbReference type="GlyCosmos" id="A0A0D1E6B3">
    <property type="glycosylation" value="1 site, No reported glycans"/>
</dbReference>
<dbReference type="EnsemblFungi" id="KIS71479">
    <property type="protein sequence ID" value="KIS71479"/>
    <property type="gene ID" value="UMAG_01374"/>
</dbReference>
<dbReference type="GeneID" id="23562419"/>
<dbReference type="KEGG" id="uma:UMAG_01374"/>
<dbReference type="VEuPathDB" id="FungiDB:UMAG_01374"/>
<dbReference type="eggNOG" id="ENOG502R2GG">
    <property type="taxonomic scope" value="Eukaryota"/>
</dbReference>
<dbReference type="InParanoid" id="A0A0D1E6B3"/>
<dbReference type="OMA" id="PNMAEIF"/>
<dbReference type="OrthoDB" id="2548644at2759"/>
<dbReference type="Proteomes" id="UP000000561">
    <property type="component" value="Chromosome 2"/>
</dbReference>
<dbReference type="GO" id="GO:0005886">
    <property type="term" value="C:plasma membrane"/>
    <property type="evidence" value="ECO:0007669"/>
    <property type="project" value="UniProtKB-SubCell"/>
</dbReference>